<keyword id="KW-0066">ATP synthesis</keyword>
<keyword id="KW-0138">CF(0)</keyword>
<keyword id="KW-0150">Chloroplast</keyword>
<keyword id="KW-0375">Hydrogen ion transport</keyword>
<keyword id="KW-0406">Ion transport</keyword>
<keyword id="KW-0446">Lipid-binding</keyword>
<keyword id="KW-0472">Membrane</keyword>
<keyword id="KW-0934">Plastid</keyword>
<keyword id="KW-0793">Thylakoid</keyword>
<keyword id="KW-0812">Transmembrane</keyword>
<keyword id="KW-1133">Transmembrane helix</keyword>
<keyword id="KW-0813">Transport</keyword>
<evidence type="ECO:0000255" key="1">
    <source>
        <dbReference type="HAMAP-Rule" id="MF_01396"/>
    </source>
</evidence>
<evidence type="ECO:0000305" key="2"/>
<geneLocation type="chloroplast"/>
<sequence>MNPIISAASVIAAGLAVGLASIGPGVGQGTAAGQALEGIARQPEAEGKIRGTLLLSLAFMEALTIYGLVVALALLFANPFV</sequence>
<accession>B2Y1W0</accession>
<accession>B7ZI48</accession>
<organism>
    <name type="scientific">Welwitschia mirabilis</name>
    <name type="common">Tree tumbo</name>
    <name type="synonym">Welwitschia bainesii</name>
    <dbReference type="NCBI Taxonomy" id="3377"/>
    <lineage>
        <taxon>Eukaryota</taxon>
        <taxon>Viridiplantae</taxon>
        <taxon>Streptophyta</taxon>
        <taxon>Embryophyta</taxon>
        <taxon>Tracheophyta</taxon>
        <taxon>Spermatophyta</taxon>
        <taxon>Gnetopsida</taxon>
        <taxon>Gnetidae</taxon>
        <taxon>Welwitschiales</taxon>
        <taxon>Welwitschiaceae</taxon>
        <taxon>Welwitschia</taxon>
    </lineage>
</organism>
<protein>
    <recommendedName>
        <fullName evidence="1">ATP synthase subunit c, chloroplastic</fullName>
    </recommendedName>
    <alternativeName>
        <fullName evidence="1">ATP synthase F(0) sector subunit c</fullName>
    </alternativeName>
    <alternativeName>
        <fullName evidence="1">ATPase subunit III</fullName>
    </alternativeName>
    <alternativeName>
        <fullName evidence="1">F-type ATPase subunit c</fullName>
        <shortName evidence="1">F-ATPase subunit c</shortName>
    </alternativeName>
    <alternativeName>
        <fullName evidence="1">Lipid-binding protein</fullName>
    </alternativeName>
</protein>
<reference key="1">
    <citation type="journal article" date="2008" name="BMC Evol. Biol.">
        <title>The complete plastid genome sequence of Welwitschia mirabilis: an unusually compact plastome with accelerated divergence rates.</title>
        <authorList>
            <person name="McCoy S.R."/>
            <person name="Kuehl J.V."/>
            <person name="Boore J.L."/>
            <person name="Raubeson L.A."/>
        </authorList>
    </citation>
    <scope>NUCLEOTIDE SEQUENCE [LARGE SCALE GENOMIC DNA]</scope>
</reference>
<reference key="2">
    <citation type="journal article" date="2009" name="Mol. Phylogenet. Evol.">
        <title>Evolution of reduced and compact chloroplast genomes (cpDNAs) in gnetophytes: Selection toward a lower-cost strategy.</title>
        <authorList>
            <person name="Wu C.-S."/>
            <person name="Lai Y.-T."/>
            <person name="Lin C.-P."/>
            <person name="Wang Y.-N."/>
            <person name="Chaw S.-M."/>
        </authorList>
    </citation>
    <scope>NUCLEOTIDE SEQUENCE [LARGE SCALE GENOMIC DNA]</scope>
</reference>
<comment type="function">
    <text evidence="1">F(1)F(0) ATP synthase produces ATP from ADP in the presence of a proton or sodium gradient. F-type ATPases consist of two structural domains, F(1) containing the extramembraneous catalytic core and F(0) containing the membrane proton channel, linked together by a central stalk and a peripheral stalk. During catalysis, ATP synthesis in the catalytic domain of F(1) is coupled via a rotary mechanism of the central stalk subunits to proton translocation.</text>
</comment>
<comment type="function">
    <text evidence="1">Key component of the F(0) channel; it plays a direct role in translocation across the membrane. A homomeric c-ring of between 10-14 subunits forms the central stalk rotor element with the F(1) delta and epsilon subunits.</text>
</comment>
<comment type="subunit">
    <text evidence="1">F-type ATPases have 2 components, F(1) - the catalytic core - and F(0) - the membrane proton channel. F(1) has five subunits: alpha(3), beta(3), gamma(1), delta(1), epsilon(1). F(0) has four main subunits: a(1), b(1), b'(1) and c(10-14). The alpha and beta chains form an alternating ring which encloses part of the gamma chain. F(1) is attached to F(0) by a central stalk formed by the gamma and epsilon chains, while a peripheral stalk is formed by the delta, b and b' chains.</text>
</comment>
<comment type="subcellular location">
    <subcellularLocation>
        <location evidence="1">Plastid</location>
        <location evidence="1">Chloroplast thylakoid membrane</location>
        <topology evidence="1">Multi-pass membrane protein</topology>
    </subcellularLocation>
</comment>
<comment type="miscellaneous">
    <text>In plastids the F-type ATPase is also known as CF(1)CF(0).</text>
</comment>
<comment type="similarity">
    <text evidence="1">Belongs to the ATPase C chain family.</text>
</comment>
<comment type="sequence caution" evidence="2">
    <conflict type="erroneous initiation">
        <sequence resource="EMBL-CDS" id="BAH11228"/>
    </conflict>
</comment>
<dbReference type="EMBL" id="EU342371">
    <property type="protein sequence ID" value="ABY26790.1"/>
    <property type="molecule type" value="Genomic_DNA"/>
</dbReference>
<dbReference type="EMBL" id="AP009568">
    <property type="protein sequence ID" value="BAH11228.1"/>
    <property type="status" value="ALT_INIT"/>
    <property type="molecule type" value="Genomic_DNA"/>
</dbReference>
<dbReference type="RefSeq" id="YP_001876577.1">
    <property type="nucleotide sequence ID" value="NC_010654.1"/>
</dbReference>
<dbReference type="SMR" id="B2Y1W0"/>
<dbReference type="GeneID" id="6276158"/>
<dbReference type="GO" id="GO:0009535">
    <property type="term" value="C:chloroplast thylakoid membrane"/>
    <property type="evidence" value="ECO:0007669"/>
    <property type="project" value="UniProtKB-SubCell"/>
</dbReference>
<dbReference type="GO" id="GO:0045259">
    <property type="term" value="C:proton-transporting ATP synthase complex"/>
    <property type="evidence" value="ECO:0007669"/>
    <property type="project" value="UniProtKB-KW"/>
</dbReference>
<dbReference type="GO" id="GO:0033177">
    <property type="term" value="C:proton-transporting two-sector ATPase complex, proton-transporting domain"/>
    <property type="evidence" value="ECO:0007669"/>
    <property type="project" value="InterPro"/>
</dbReference>
<dbReference type="GO" id="GO:0008289">
    <property type="term" value="F:lipid binding"/>
    <property type="evidence" value="ECO:0007669"/>
    <property type="project" value="UniProtKB-KW"/>
</dbReference>
<dbReference type="GO" id="GO:0046933">
    <property type="term" value="F:proton-transporting ATP synthase activity, rotational mechanism"/>
    <property type="evidence" value="ECO:0007669"/>
    <property type="project" value="UniProtKB-UniRule"/>
</dbReference>
<dbReference type="CDD" id="cd18183">
    <property type="entry name" value="ATP-synt_Fo_c_ATPH"/>
    <property type="match status" value="1"/>
</dbReference>
<dbReference type="FunFam" id="1.20.20.10:FF:000001">
    <property type="entry name" value="ATP synthase subunit c, chloroplastic"/>
    <property type="match status" value="1"/>
</dbReference>
<dbReference type="Gene3D" id="1.20.20.10">
    <property type="entry name" value="F1F0 ATP synthase subunit C"/>
    <property type="match status" value="1"/>
</dbReference>
<dbReference type="HAMAP" id="MF_01396">
    <property type="entry name" value="ATP_synth_c_bact"/>
    <property type="match status" value="1"/>
</dbReference>
<dbReference type="InterPro" id="IPR005953">
    <property type="entry name" value="ATP_synth_csu_bac/chlpt"/>
</dbReference>
<dbReference type="InterPro" id="IPR000454">
    <property type="entry name" value="ATP_synth_F0_csu"/>
</dbReference>
<dbReference type="InterPro" id="IPR020537">
    <property type="entry name" value="ATP_synth_F0_csu_DDCD_BS"/>
</dbReference>
<dbReference type="InterPro" id="IPR038662">
    <property type="entry name" value="ATP_synth_F0_csu_sf"/>
</dbReference>
<dbReference type="InterPro" id="IPR002379">
    <property type="entry name" value="ATPase_proteolipid_c-like_dom"/>
</dbReference>
<dbReference type="InterPro" id="IPR035921">
    <property type="entry name" value="F/V-ATP_Csub_sf"/>
</dbReference>
<dbReference type="NCBIfam" id="TIGR01260">
    <property type="entry name" value="ATP_synt_c"/>
    <property type="match status" value="1"/>
</dbReference>
<dbReference type="NCBIfam" id="NF005608">
    <property type="entry name" value="PRK07354.1"/>
    <property type="match status" value="1"/>
</dbReference>
<dbReference type="PANTHER" id="PTHR10031">
    <property type="entry name" value="ATP SYNTHASE LIPID-BINDING PROTEIN, MITOCHONDRIAL"/>
    <property type="match status" value="1"/>
</dbReference>
<dbReference type="PANTHER" id="PTHR10031:SF0">
    <property type="entry name" value="ATPASE PROTEIN 9"/>
    <property type="match status" value="1"/>
</dbReference>
<dbReference type="Pfam" id="PF00137">
    <property type="entry name" value="ATP-synt_C"/>
    <property type="match status" value="1"/>
</dbReference>
<dbReference type="PRINTS" id="PR00124">
    <property type="entry name" value="ATPASEC"/>
</dbReference>
<dbReference type="SUPFAM" id="SSF81333">
    <property type="entry name" value="F1F0 ATP synthase subunit C"/>
    <property type="match status" value="1"/>
</dbReference>
<dbReference type="PROSITE" id="PS00605">
    <property type="entry name" value="ATPASE_C"/>
    <property type="match status" value="1"/>
</dbReference>
<proteinExistence type="inferred from homology"/>
<name>ATPH_WELMI</name>
<gene>
    <name evidence="1" type="primary">atpH</name>
</gene>
<feature type="chain" id="PRO_0000362968" description="ATP synthase subunit c, chloroplastic">
    <location>
        <begin position="1"/>
        <end position="81"/>
    </location>
</feature>
<feature type="transmembrane region" description="Helical" evidence="1">
    <location>
        <begin position="3"/>
        <end position="23"/>
    </location>
</feature>
<feature type="transmembrane region" description="Helical" evidence="1">
    <location>
        <begin position="57"/>
        <end position="77"/>
    </location>
</feature>
<feature type="site" description="Reversibly protonated during proton transport" evidence="1">
    <location>
        <position position="61"/>
    </location>
</feature>